<organism>
    <name type="scientific">Oryza sativa subsp. japonica</name>
    <name type="common">Rice</name>
    <dbReference type="NCBI Taxonomy" id="39947"/>
    <lineage>
        <taxon>Eukaryota</taxon>
        <taxon>Viridiplantae</taxon>
        <taxon>Streptophyta</taxon>
        <taxon>Embryophyta</taxon>
        <taxon>Tracheophyta</taxon>
        <taxon>Spermatophyta</taxon>
        <taxon>Magnoliopsida</taxon>
        <taxon>Liliopsida</taxon>
        <taxon>Poales</taxon>
        <taxon>Poaceae</taxon>
        <taxon>BOP clade</taxon>
        <taxon>Oryzoideae</taxon>
        <taxon>Oryzeae</taxon>
        <taxon>Oryzinae</taxon>
        <taxon>Oryza</taxon>
        <taxon>Oryza sativa</taxon>
    </lineage>
</organism>
<name>ITPK5_ORYSJ</name>
<proteinExistence type="evidence at transcript level"/>
<feature type="chain" id="PRO_0000431877" description="Inositol-tetrakisphosphate 1-kinase 5">
    <location>
        <begin position="1"/>
        <end position="342"/>
    </location>
</feature>
<feature type="binding site" evidence="3">
    <location>
        <position position="25"/>
    </location>
    <ligand>
        <name>1D-myo-inositol 1,3,4-trisphosphate</name>
        <dbReference type="ChEBI" id="CHEBI:58414"/>
    </ligand>
</feature>
<feature type="binding site" evidence="3">
    <location>
        <position position="67"/>
    </location>
    <ligand>
        <name>1D-myo-inositol 1,3,4-trisphosphate</name>
        <dbReference type="ChEBI" id="CHEBI:58414"/>
    </ligand>
</feature>
<feature type="binding site" evidence="1">
    <location>
        <position position="102"/>
    </location>
    <ligand>
        <name>ATP</name>
        <dbReference type="ChEBI" id="CHEBI:30616"/>
    </ligand>
</feature>
<feature type="binding site" evidence="1">
    <location>
        <position position="154"/>
    </location>
    <ligand>
        <name>ATP</name>
        <dbReference type="ChEBI" id="CHEBI:30616"/>
    </ligand>
</feature>
<feature type="binding site" evidence="3">
    <location>
        <position position="165"/>
    </location>
    <ligand>
        <name>1D-myo-inositol 1,3,4-trisphosphate</name>
        <dbReference type="ChEBI" id="CHEBI:58414"/>
    </ligand>
</feature>
<feature type="binding site" evidence="1">
    <location>
        <begin position="186"/>
        <end position="197"/>
    </location>
    <ligand>
        <name>ATP</name>
        <dbReference type="ChEBI" id="CHEBI:30616"/>
    </ligand>
</feature>
<feature type="binding site" evidence="3">
    <location>
        <position position="197"/>
    </location>
    <ligand>
        <name>1D-myo-inositol 1,3,4-trisphosphate</name>
        <dbReference type="ChEBI" id="CHEBI:58414"/>
    </ligand>
</feature>
<feature type="binding site" evidence="1">
    <location>
        <position position="212"/>
    </location>
    <ligand>
        <name>ATP</name>
        <dbReference type="ChEBI" id="CHEBI:30616"/>
    </ligand>
</feature>
<feature type="binding site" evidence="1">
    <location>
        <position position="283"/>
    </location>
    <ligand>
        <name>Mg(2+)</name>
        <dbReference type="ChEBI" id="CHEBI:18420"/>
        <label>1</label>
    </ligand>
</feature>
<feature type="binding site" evidence="1">
    <location>
        <position position="298"/>
    </location>
    <ligand>
        <name>Mg(2+)</name>
        <dbReference type="ChEBI" id="CHEBI:18420"/>
        <label>1</label>
    </ligand>
</feature>
<feature type="binding site" evidence="1">
    <location>
        <position position="298"/>
    </location>
    <ligand>
        <name>Mg(2+)</name>
        <dbReference type="ChEBI" id="CHEBI:18420"/>
        <label>2</label>
    </ligand>
</feature>
<feature type="binding site" evidence="3">
    <location>
        <position position="300"/>
    </location>
    <ligand>
        <name>1D-myo-inositol 1,3,4-trisphosphate</name>
        <dbReference type="ChEBI" id="CHEBI:58414"/>
    </ligand>
</feature>
<feature type="binding site" evidence="1">
    <location>
        <position position="300"/>
    </location>
    <ligand>
        <name>Mg(2+)</name>
        <dbReference type="ChEBI" id="CHEBI:18420"/>
        <label>2</label>
    </ligand>
</feature>
<keyword id="KW-0067">ATP-binding</keyword>
<keyword id="KW-0418">Kinase</keyword>
<keyword id="KW-0460">Magnesium</keyword>
<keyword id="KW-0479">Metal-binding</keyword>
<keyword id="KW-0547">Nucleotide-binding</keyword>
<keyword id="KW-1185">Reference proteome</keyword>
<keyword id="KW-0808">Transferase</keyword>
<gene>
    <name type="primary">ITPK5</name>
    <name evidence="11" type="ordered locus">Os10g0576100</name>
    <name evidence="10" type="ordered locus">LOC_Os10g42550</name>
    <name evidence="9" type="ORF">OSJNBa0027L23.5</name>
</gene>
<dbReference type="EC" id="2.7.1.134" evidence="8"/>
<dbReference type="EC" id="2.7.1.159" evidence="8"/>
<dbReference type="EMBL" id="AC018929">
    <property type="protein sequence ID" value="AAL67584.1"/>
    <property type="molecule type" value="Genomic_DNA"/>
</dbReference>
<dbReference type="EMBL" id="DP000086">
    <property type="protein sequence ID" value="AAP55148.1"/>
    <property type="molecule type" value="Genomic_DNA"/>
</dbReference>
<dbReference type="EMBL" id="AP008216">
    <property type="protein sequence ID" value="BAF27322.1"/>
    <property type="status" value="ALT_INIT"/>
    <property type="molecule type" value="Genomic_DNA"/>
</dbReference>
<dbReference type="EMBL" id="AP014966">
    <property type="protein sequence ID" value="BAT12203.1"/>
    <property type="molecule type" value="Genomic_DNA"/>
</dbReference>
<dbReference type="EMBL" id="AK059148">
    <property type="protein sequence ID" value="BAG86903.1"/>
    <property type="molecule type" value="mRNA"/>
</dbReference>
<dbReference type="RefSeq" id="XP_015614076.1">
    <property type="nucleotide sequence ID" value="XM_015758590.1"/>
</dbReference>
<dbReference type="SMR" id="Q7XBW0"/>
<dbReference type="FunCoup" id="Q7XBW0">
    <property type="interactions" value="1185"/>
</dbReference>
<dbReference type="STRING" id="39947.Q7XBW0"/>
<dbReference type="PaxDb" id="39947-Q7XBW0"/>
<dbReference type="EnsemblPlants" id="Os10t0576100-01">
    <property type="protein sequence ID" value="Os10t0576100-01"/>
    <property type="gene ID" value="Os10g0576100"/>
</dbReference>
<dbReference type="Gramene" id="Os10t0576100-01">
    <property type="protein sequence ID" value="Os10t0576100-01"/>
    <property type="gene ID" value="Os10g0576100"/>
</dbReference>
<dbReference type="KEGG" id="dosa:Os10g0576100"/>
<dbReference type="eggNOG" id="ENOG502QQS1">
    <property type="taxonomic scope" value="Eukaryota"/>
</dbReference>
<dbReference type="HOGENOM" id="CLU_041857_0_0_1"/>
<dbReference type="InParanoid" id="Q7XBW0"/>
<dbReference type="OMA" id="ESCSHLT"/>
<dbReference type="OrthoDB" id="25308at2759"/>
<dbReference type="PlantReactome" id="R-OSA-1119434">
    <property type="pathway name" value="Phytic acid biosynthesis (lipid-independent)"/>
</dbReference>
<dbReference type="Proteomes" id="UP000000763">
    <property type="component" value="Chromosome 10"/>
</dbReference>
<dbReference type="Proteomes" id="UP000059680">
    <property type="component" value="Chromosome 10"/>
</dbReference>
<dbReference type="GO" id="GO:0005524">
    <property type="term" value="F:ATP binding"/>
    <property type="evidence" value="ECO:0007669"/>
    <property type="project" value="UniProtKB-KW"/>
</dbReference>
<dbReference type="GO" id="GO:0052726">
    <property type="term" value="F:inositol-1,3,4-trisphosphate 5-kinase activity"/>
    <property type="evidence" value="ECO:0000318"/>
    <property type="project" value="GO_Central"/>
</dbReference>
<dbReference type="GO" id="GO:0052725">
    <property type="term" value="F:inositol-1,3,4-trisphosphate 6-kinase activity"/>
    <property type="evidence" value="ECO:0000318"/>
    <property type="project" value="GO_Central"/>
</dbReference>
<dbReference type="GO" id="GO:0047325">
    <property type="term" value="F:inositol-3,4,5,6-tetrakisphosphate 1-kinase activity"/>
    <property type="evidence" value="ECO:0000318"/>
    <property type="project" value="GO_Central"/>
</dbReference>
<dbReference type="GO" id="GO:0000287">
    <property type="term" value="F:magnesium ion binding"/>
    <property type="evidence" value="ECO:0007669"/>
    <property type="project" value="InterPro"/>
</dbReference>
<dbReference type="GO" id="GO:0032957">
    <property type="term" value="P:inositol trisphosphate metabolic process"/>
    <property type="evidence" value="ECO:0007669"/>
    <property type="project" value="InterPro"/>
</dbReference>
<dbReference type="FunFam" id="3.30.470.20:FF:000056">
    <property type="entry name" value="Inositol-tetrakisphosphate 1-kinase"/>
    <property type="match status" value="1"/>
</dbReference>
<dbReference type="Gene3D" id="3.30.470.20">
    <property type="entry name" value="ATP-grasp fold, B domain"/>
    <property type="match status" value="1"/>
</dbReference>
<dbReference type="InterPro" id="IPR008656">
    <property type="entry name" value="Inositol_tetrakis-P_1-kinase"/>
</dbReference>
<dbReference type="InterPro" id="IPR040464">
    <property type="entry name" value="InsP(3)kin_ATP-grasp"/>
</dbReference>
<dbReference type="InterPro" id="IPR041429">
    <property type="entry name" value="ITPK1_N"/>
</dbReference>
<dbReference type="PANTHER" id="PTHR14217">
    <property type="entry name" value="INOSITOL-TETRAKISPHOSPHATE 1-KINASE"/>
    <property type="match status" value="1"/>
</dbReference>
<dbReference type="PANTHER" id="PTHR14217:SF24">
    <property type="entry name" value="INOSITOL-TETRAKISPHOSPHATE 1-KINASE 1"/>
    <property type="match status" value="1"/>
</dbReference>
<dbReference type="Pfam" id="PF05770">
    <property type="entry name" value="Ins134_P3_kin"/>
    <property type="match status" value="1"/>
</dbReference>
<dbReference type="Pfam" id="PF17927">
    <property type="entry name" value="Ins134_P3_kin_N"/>
    <property type="match status" value="1"/>
</dbReference>
<dbReference type="PIRSF" id="PIRSF038186">
    <property type="entry name" value="ITPK"/>
    <property type="match status" value="1"/>
</dbReference>
<dbReference type="SUPFAM" id="SSF56059">
    <property type="entry name" value="Glutathione synthetase ATP-binding domain-like"/>
    <property type="match status" value="1"/>
</dbReference>
<protein>
    <recommendedName>
        <fullName evidence="8">Inositol-tetrakisphosphate 1-kinase 5</fullName>
        <ecNumber evidence="8">2.7.1.134</ecNumber>
    </recommendedName>
    <alternativeName>
        <fullName evidence="8">Inositol 1,3,4-trisphosphate 5/6-kinase 5</fullName>
        <shortName evidence="8">Inositol-triphosphate 5/6-kinase 5</shortName>
        <shortName evidence="8">Ins(1,3,4)P(3) 5/6-kinase 5</shortName>
        <shortName evidence="6">OsITP5/6K-5</shortName>
        <shortName evidence="7">OsITPK5</shortName>
        <ecNumber evidence="8">2.7.1.159</ecNumber>
    </alternativeName>
    <alternativeName>
        <fullName evidence="8">OsITL3</fullName>
    </alternativeName>
</protein>
<reference key="1">
    <citation type="journal article" date="2003" name="Science">
        <title>In-depth view of structure, activity, and evolution of rice chromosome 10.</title>
        <authorList>
            <person name="Yu Y."/>
            <person name="Rambo T."/>
            <person name="Currie J."/>
            <person name="Saski C."/>
            <person name="Kim H.-R."/>
            <person name="Collura K."/>
            <person name="Thompson S."/>
            <person name="Simmons J."/>
            <person name="Yang T.-J."/>
            <person name="Nah G."/>
            <person name="Patel A.J."/>
            <person name="Thurmond S."/>
            <person name="Henry D."/>
            <person name="Oates R."/>
            <person name="Palmer M."/>
            <person name="Pries G."/>
            <person name="Gibson J."/>
            <person name="Anderson H."/>
            <person name="Paradkar M."/>
            <person name="Crane L."/>
            <person name="Dale J."/>
            <person name="Carver M.B."/>
            <person name="Wood T."/>
            <person name="Frisch D."/>
            <person name="Engler F."/>
            <person name="Soderlund C."/>
            <person name="Palmer L.E."/>
            <person name="Teytelman L."/>
            <person name="Nascimento L."/>
            <person name="De la Bastide M."/>
            <person name="Spiegel L."/>
            <person name="Ware D."/>
            <person name="O'Shaughnessy A."/>
            <person name="Dike S."/>
            <person name="Dedhia N."/>
            <person name="Preston R."/>
            <person name="Huang E."/>
            <person name="Ferraro K."/>
            <person name="Kuit K."/>
            <person name="Miller B."/>
            <person name="Zutavern T."/>
            <person name="Katzenberger F."/>
            <person name="Muller S."/>
            <person name="Balija V."/>
            <person name="Martienssen R.A."/>
            <person name="Stein L."/>
            <person name="Minx P."/>
            <person name="Johnson D."/>
            <person name="Cordum H."/>
            <person name="Mardis E."/>
            <person name="Cheng Z."/>
            <person name="Jiang J."/>
            <person name="Wilson R."/>
            <person name="McCombie W.R."/>
            <person name="Wing R.A."/>
            <person name="Yuan Q."/>
            <person name="Ouyang S."/>
            <person name="Liu J."/>
            <person name="Jones K.M."/>
            <person name="Gansberger K."/>
            <person name="Moffat K."/>
            <person name="Hill J."/>
            <person name="Tsitrin T."/>
            <person name="Overton L."/>
            <person name="Bera J."/>
            <person name="Kim M."/>
            <person name="Jin S."/>
            <person name="Tallon L."/>
            <person name="Ciecko A."/>
            <person name="Pai G."/>
            <person name="Van Aken S."/>
            <person name="Utterback T."/>
            <person name="Reidmuller S."/>
            <person name="Bormann J."/>
            <person name="Feldblyum T."/>
            <person name="Hsiao J."/>
            <person name="Zismann V."/>
            <person name="Blunt S."/>
            <person name="de Vazeille A.R."/>
            <person name="Shaffer T."/>
            <person name="Koo H."/>
            <person name="Suh B."/>
            <person name="Yang Q."/>
            <person name="Haas B."/>
            <person name="Peterson J."/>
            <person name="Pertea M."/>
            <person name="Volfovsky N."/>
            <person name="Wortman J."/>
            <person name="White O."/>
            <person name="Salzberg S.L."/>
            <person name="Fraser C.M."/>
            <person name="Buell C.R."/>
            <person name="Messing J."/>
            <person name="Song R."/>
            <person name="Fuks G."/>
            <person name="Llaca V."/>
            <person name="Kovchak S."/>
            <person name="Young S."/>
            <person name="Bowers J.E."/>
            <person name="Paterson A.H."/>
            <person name="Johns M.A."/>
            <person name="Mao L."/>
            <person name="Pan H."/>
            <person name="Dean R.A."/>
        </authorList>
    </citation>
    <scope>NUCLEOTIDE SEQUENCE [LARGE SCALE GENOMIC DNA]</scope>
    <source>
        <strain>cv. Nipponbare</strain>
    </source>
</reference>
<reference key="2">
    <citation type="journal article" date="2005" name="Nature">
        <title>The map-based sequence of the rice genome.</title>
        <authorList>
            <consortium name="International rice genome sequencing project (IRGSP)"/>
        </authorList>
    </citation>
    <scope>NUCLEOTIDE SEQUENCE [LARGE SCALE GENOMIC DNA]</scope>
    <source>
        <strain>cv. Nipponbare</strain>
    </source>
</reference>
<reference key="3">
    <citation type="journal article" date="2008" name="Nucleic Acids Res.">
        <title>The rice annotation project database (RAP-DB): 2008 update.</title>
        <authorList>
            <consortium name="The rice annotation project (RAP)"/>
        </authorList>
    </citation>
    <scope>GENOME REANNOTATION</scope>
    <source>
        <strain>cv. Nipponbare</strain>
    </source>
</reference>
<reference key="4">
    <citation type="journal article" date="2013" name="Rice">
        <title>Improvement of the Oryza sativa Nipponbare reference genome using next generation sequence and optical map data.</title>
        <authorList>
            <person name="Kawahara Y."/>
            <person name="de la Bastide M."/>
            <person name="Hamilton J.P."/>
            <person name="Kanamori H."/>
            <person name="McCombie W.R."/>
            <person name="Ouyang S."/>
            <person name="Schwartz D.C."/>
            <person name="Tanaka T."/>
            <person name="Wu J."/>
            <person name="Zhou S."/>
            <person name="Childs K.L."/>
            <person name="Davidson R.M."/>
            <person name="Lin H."/>
            <person name="Quesada-Ocampo L."/>
            <person name="Vaillancourt B."/>
            <person name="Sakai H."/>
            <person name="Lee S.S."/>
            <person name="Kim J."/>
            <person name="Numa H."/>
            <person name="Itoh T."/>
            <person name="Buell C.R."/>
            <person name="Matsumoto T."/>
        </authorList>
    </citation>
    <scope>GENOME REANNOTATION</scope>
    <source>
        <strain>cv. Nipponbare</strain>
    </source>
</reference>
<reference key="5">
    <citation type="journal article" date="2003" name="Science">
        <title>Collection, mapping, and annotation of over 28,000 cDNA clones from japonica rice.</title>
        <authorList>
            <consortium name="The rice full-length cDNA consortium"/>
        </authorList>
    </citation>
    <scope>NUCLEOTIDE SEQUENCE [LARGE SCALE MRNA]</scope>
    <source>
        <strain>cv. Nipponbare</strain>
    </source>
</reference>
<reference key="6">
    <citation type="journal article" date="2007" name="Gene">
        <title>Expression pattern of inositol phosphate-related enzymes in rice (Oryza sativa L.): implications for the phytic acid biosynthetic pathway.</title>
        <authorList>
            <person name="Suzuki M."/>
            <person name="Tanaka K."/>
            <person name="Kuwano M."/>
            <person name="Yoshida K.T."/>
        </authorList>
    </citation>
    <scope>TISSUE SPECIFICITY</scope>
    <scope>GENE FAMILY</scope>
    <scope>NOMENCLATURE</scope>
</reference>
<reference key="7">
    <citation type="journal article" date="2011" name="Plant Mol. Biol.">
        <title>Characterization of an inositol 1,3,4-trisphosphate 5/6-kinase gene that is essential for drought and salt stress responses in rice.</title>
        <authorList>
            <person name="Du H."/>
            <person name="Liu L."/>
            <person name="You L."/>
            <person name="Yang M."/>
            <person name="He Y."/>
            <person name="Li X."/>
            <person name="Xiong L."/>
        </authorList>
    </citation>
    <scope>INDUCTION</scope>
    <scope>GENE FAMILY</scope>
    <scope>NOMENCLATURE</scope>
</reference>
<evidence type="ECO:0000250" key="1">
    <source>
        <dbReference type="UniProtKB" id="Q13572"/>
    </source>
</evidence>
<evidence type="ECO:0000250" key="2">
    <source>
        <dbReference type="UniProtKB" id="Q84Y01"/>
    </source>
</evidence>
<evidence type="ECO:0000250" key="3">
    <source>
        <dbReference type="UniProtKB" id="Q9XYQ1"/>
    </source>
</evidence>
<evidence type="ECO:0000269" key="4">
    <source>
    </source>
</evidence>
<evidence type="ECO:0000269" key="5">
    <source>
    </source>
</evidence>
<evidence type="ECO:0000303" key="6">
    <source>
    </source>
</evidence>
<evidence type="ECO:0000303" key="7">
    <source>
    </source>
</evidence>
<evidence type="ECO:0000305" key="8"/>
<evidence type="ECO:0000312" key="9">
    <source>
        <dbReference type="EMBL" id="AAL67584.1"/>
    </source>
</evidence>
<evidence type="ECO:0000312" key="10">
    <source>
        <dbReference type="EMBL" id="AAP55148.1"/>
    </source>
</evidence>
<evidence type="ECO:0000312" key="11">
    <source>
        <dbReference type="EMBL" id="BAF27322.1"/>
    </source>
</evidence>
<sequence length="342" mass="38072">MAGDEPLPGDGQRRRYLIGYALAPKKQQSFIQPSLVSRAAGRGMDLVPVDPSRPLPEQGPFHLLIHKLYGEEWRGQLDAFSAAHPAVPVVDPPHAIDRLHNRISMLQVVSELDVPLHAHHHHTFGIPSQVVVYDAAALSDSGLLAALRFPLIAKPLVADGTAKSHKMSLVYHREGLRKLRPPLVLQEFVNHGGVIFKVYVVGAHVTCVKRRSLPDVSSDVLQDASAEGSLSFSQVSNLPNERTAQEYYDDMRLEDAIMPPTAFINDIAAALRRALGLHLFNFDMIRDARAGDRYLVIDINYFPGYAKMPGYETVLTDFFWEMVHKDDDTPNLNPNPNDEDVK</sequence>
<comment type="function">
    <text evidence="2">Kinase that can phosphorylate various inositol polyphosphate such as Ins(3,4,5,6)P4 or Ins(1,3,4)P3 and participates in phytic acid biosynthesis in developing seeds. Phytic acid is the primary storage form of phosphorus in cereal grains and other plant seeds.</text>
</comment>
<comment type="catalytic activity">
    <reaction evidence="8">
        <text>1D-myo-inositol 3,4,5,6-tetrakisphosphate + ATP = 1D-myo-inositol 1,3,4,5,6-pentakisphosphate + ADP + H(+)</text>
        <dbReference type="Rhea" id="RHEA:12452"/>
        <dbReference type="ChEBI" id="CHEBI:15378"/>
        <dbReference type="ChEBI" id="CHEBI:30616"/>
        <dbReference type="ChEBI" id="CHEBI:57539"/>
        <dbReference type="ChEBI" id="CHEBI:57733"/>
        <dbReference type="ChEBI" id="CHEBI:456216"/>
        <dbReference type="EC" id="2.7.1.134"/>
    </reaction>
</comment>
<comment type="catalytic activity">
    <reaction evidence="8">
        <text>1D-myo-inositol 1,3,4-trisphosphate + ATP = 1D-myo-inositol 1,3,4,5-tetrakisphosphate + ADP + H(+)</text>
        <dbReference type="Rhea" id="RHEA:13253"/>
        <dbReference type="ChEBI" id="CHEBI:15378"/>
        <dbReference type="ChEBI" id="CHEBI:30616"/>
        <dbReference type="ChEBI" id="CHEBI:57895"/>
        <dbReference type="ChEBI" id="CHEBI:58414"/>
        <dbReference type="ChEBI" id="CHEBI:456216"/>
        <dbReference type="EC" id="2.7.1.159"/>
    </reaction>
</comment>
<comment type="catalytic activity">
    <reaction evidence="8">
        <text>1D-myo-inositol 1,3,4-trisphosphate + ATP = 1D-myo-inositol 1,3,4,6-tetrakisphosphate + ADP + H(+)</text>
        <dbReference type="Rhea" id="RHEA:20940"/>
        <dbReference type="ChEBI" id="CHEBI:15378"/>
        <dbReference type="ChEBI" id="CHEBI:30616"/>
        <dbReference type="ChEBI" id="CHEBI:57660"/>
        <dbReference type="ChEBI" id="CHEBI:58414"/>
        <dbReference type="ChEBI" id="CHEBI:456216"/>
        <dbReference type="EC" id="2.7.1.159"/>
    </reaction>
</comment>
<comment type="cofactor">
    <cofactor evidence="1">
        <name>Mg(2+)</name>
        <dbReference type="ChEBI" id="CHEBI:18420"/>
    </cofactor>
    <text evidence="1">Binds 2 magnesium ions per subunit.</text>
</comment>
<comment type="subunit">
    <text evidence="1">Monomer.</text>
</comment>
<comment type="tissue specificity">
    <text evidence="4">Expressed in roots, leaves, flowers, anthers and embryos.</text>
</comment>
<comment type="induction">
    <text evidence="5">By drought stress.</text>
</comment>
<comment type="similarity">
    <text evidence="8">Belongs to the ITPK1 family.</text>
</comment>
<comment type="sequence caution" evidence="8">
    <conflict type="erroneous initiation">
        <sequence resource="EMBL-CDS" id="BAF27322"/>
    </conflict>
    <text>Extended N-terminus.</text>
</comment>
<accession>Q7XBW0</accession>
<accession>A0A0P0XXN1</accession>
<accession>Q0IVE3</accession>
<accession>Q8W3H7</accession>